<evidence type="ECO:0000250" key="1"/>
<evidence type="ECO:0000255" key="2"/>
<evidence type="ECO:0000255" key="3">
    <source>
        <dbReference type="PROSITE-ProRule" id="PRU00691"/>
    </source>
</evidence>
<evidence type="ECO:0000305" key="4"/>
<sequence>MGKPTLPPVVVVVVLLLLVVVLPATTCGADAGGGGEAEEFQIPRDGRVLELDDGNFDAAVRAAGLLFVDFYAPWCGHCKRLAPQLDEAAPVLAGLSTPIVVAKVNADKYKKLGSKYGVDGFPTLMLFDHGTPTEYTGSRKADLLVENLKKLVAPDVSVLESDSAIKSFVEDAGMGFPLFLGFGVDESLIVEYGAKYKNRAWFSVAKDFSEDMMVFYDFDKVPALVSVNPKYREQSIFYGPFDDGAFLEDFIRNSLLPLVVPMNRETVKMLNDDGRKVVLMILQDDESDENSPRLIKVLRSAASANRDLVFGYVGVNQWEEFTETFDVKSSELPTMIVWDKKEEYEIVEGSERLEEGDYGSQISRFLEGYRAGRTIKKKVGDRSPTLLGVNAVYILVFLVAVLVLLMYFSGQGEEDQRPRQRAHED</sequence>
<dbReference type="EMBL" id="AP008208">
    <property type="protein sequence ID" value="BAF09007.1"/>
    <property type="molecule type" value="Genomic_DNA"/>
</dbReference>
<dbReference type="EMBL" id="AP014958">
    <property type="status" value="NOT_ANNOTATED_CDS"/>
    <property type="molecule type" value="Genomic_DNA"/>
</dbReference>
<dbReference type="EMBL" id="CM000139">
    <property type="protein sequence ID" value="EAZ23399.1"/>
    <property type="molecule type" value="Genomic_DNA"/>
</dbReference>
<dbReference type="RefSeq" id="XP_015627163.1">
    <property type="nucleotide sequence ID" value="XM_015771677.1"/>
</dbReference>
<dbReference type="SMR" id="Q0E0I1"/>
<dbReference type="FunCoup" id="Q0E0I1">
    <property type="interactions" value="337"/>
</dbReference>
<dbReference type="STRING" id="39947.Q0E0I1"/>
<dbReference type="PaxDb" id="39947-Q0E0I1"/>
<dbReference type="KEGG" id="dosa:Os02g0550300"/>
<dbReference type="eggNOG" id="KOG0190">
    <property type="taxonomic scope" value="Eukaryota"/>
</dbReference>
<dbReference type="HOGENOM" id="CLU_054116_0_0_1"/>
<dbReference type="InParanoid" id="Q0E0I1"/>
<dbReference type="OrthoDB" id="74910at2759"/>
<dbReference type="Proteomes" id="UP000000763">
    <property type="component" value="Chromosome 2"/>
</dbReference>
<dbReference type="Proteomes" id="UP000007752">
    <property type="component" value="Chromosome 2"/>
</dbReference>
<dbReference type="Proteomes" id="UP000059680">
    <property type="component" value="Chromosome 2"/>
</dbReference>
<dbReference type="GO" id="GO:0005783">
    <property type="term" value="C:endoplasmic reticulum"/>
    <property type="evidence" value="ECO:0000318"/>
    <property type="project" value="GO_Central"/>
</dbReference>
<dbReference type="GO" id="GO:0016020">
    <property type="term" value="C:membrane"/>
    <property type="evidence" value="ECO:0007669"/>
    <property type="project" value="UniProtKB-SubCell"/>
</dbReference>
<dbReference type="GO" id="GO:0003756">
    <property type="term" value="F:protein disulfide isomerase activity"/>
    <property type="evidence" value="ECO:0000318"/>
    <property type="project" value="GO_Central"/>
</dbReference>
<dbReference type="GO" id="GO:0006457">
    <property type="term" value="P:protein folding"/>
    <property type="evidence" value="ECO:0000318"/>
    <property type="project" value="GO_Central"/>
</dbReference>
<dbReference type="GO" id="GO:0034976">
    <property type="term" value="P:response to endoplasmic reticulum stress"/>
    <property type="evidence" value="ECO:0000318"/>
    <property type="project" value="GO_Central"/>
</dbReference>
<dbReference type="CDD" id="cd02961">
    <property type="entry name" value="PDI_a_family"/>
    <property type="match status" value="1"/>
</dbReference>
<dbReference type="FunFam" id="3.40.30.10:FF:000193">
    <property type="entry name" value="Protein disulfide isomerase-like 5-2"/>
    <property type="match status" value="1"/>
</dbReference>
<dbReference type="FunFam" id="3.40.30.10:FF:000107">
    <property type="entry name" value="Protein disulfide-isomerase 5-2"/>
    <property type="match status" value="1"/>
</dbReference>
<dbReference type="Gene3D" id="3.40.30.10">
    <property type="entry name" value="Glutaredoxin"/>
    <property type="match status" value="2"/>
</dbReference>
<dbReference type="InterPro" id="IPR036249">
    <property type="entry name" value="Thioredoxin-like_sf"/>
</dbReference>
<dbReference type="InterPro" id="IPR017937">
    <property type="entry name" value="Thioredoxin_CS"/>
</dbReference>
<dbReference type="InterPro" id="IPR013766">
    <property type="entry name" value="Thioredoxin_domain"/>
</dbReference>
<dbReference type="PANTHER" id="PTHR18929">
    <property type="entry name" value="PROTEIN DISULFIDE ISOMERASE"/>
    <property type="match status" value="1"/>
</dbReference>
<dbReference type="PANTHER" id="PTHR18929:SF167">
    <property type="entry name" value="PROTEIN DISULFIDE ISOMERASE-LIKE 5-3"/>
    <property type="match status" value="1"/>
</dbReference>
<dbReference type="Pfam" id="PF00085">
    <property type="entry name" value="Thioredoxin"/>
    <property type="match status" value="1"/>
</dbReference>
<dbReference type="Pfam" id="PF13848">
    <property type="entry name" value="Thioredoxin_6"/>
    <property type="match status" value="1"/>
</dbReference>
<dbReference type="PRINTS" id="PR00421">
    <property type="entry name" value="THIOREDOXIN"/>
</dbReference>
<dbReference type="SUPFAM" id="SSF52833">
    <property type="entry name" value="Thioredoxin-like"/>
    <property type="match status" value="2"/>
</dbReference>
<dbReference type="PROSITE" id="PS00194">
    <property type="entry name" value="THIOREDOXIN_1"/>
    <property type="match status" value="1"/>
</dbReference>
<dbReference type="PROSITE" id="PS51352">
    <property type="entry name" value="THIOREDOXIN_2"/>
    <property type="match status" value="1"/>
</dbReference>
<keyword id="KW-1015">Disulfide bond</keyword>
<keyword id="KW-0472">Membrane</keyword>
<keyword id="KW-0676">Redox-active center</keyword>
<keyword id="KW-1185">Reference proteome</keyword>
<keyword id="KW-0732">Signal</keyword>
<keyword id="KW-0812">Transmembrane</keyword>
<keyword id="KW-1133">Transmembrane helix</keyword>
<gene>
    <name type="primary">PDIL5-3</name>
    <name type="synonym">PDIL7-2</name>
    <name type="ordered locus">Os02g0550300</name>
    <name type="ordered locus">LOC_Os02g34530</name>
    <name type="ORF">OsJ_07093</name>
</gene>
<reference key="1">
    <citation type="journal article" date="2005" name="Nature">
        <title>The map-based sequence of the rice genome.</title>
        <authorList>
            <consortium name="International rice genome sequencing project (IRGSP)"/>
        </authorList>
    </citation>
    <scope>NUCLEOTIDE SEQUENCE [LARGE SCALE GENOMIC DNA]</scope>
    <source>
        <strain>cv. Nipponbare</strain>
    </source>
</reference>
<reference key="2">
    <citation type="journal article" date="2008" name="Nucleic Acids Res.">
        <title>The rice annotation project database (RAP-DB): 2008 update.</title>
        <authorList>
            <consortium name="The rice annotation project (RAP)"/>
        </authorList>
    </citation>
    <scope>GENOME REANNOTATION</scope>
    <source>
        <strain>cv. Nipponbare</strain>
    </source>
</reference>
<reference key="3">
    <citation type="journal article" date="2013" name="Rice">
        <title>Improvement of the Oryza sativa Nipponbare reference genome using next generation sequence and optical map data.</title>
        <authorList>
            <person name="Kawahara Y."/>
            <person name="de la Bastide M."/>
            <person name="Hamilton J.P."/>
            <person name="Kanamori H."/>
            <person name="McCombie W.R."/>
            <person name="Ouyang S."/>
            <person name="Schwartz D.C."/>
            <person name="Tanaka T."/>
            <person name="Wu J."/>
            <person name="Zhou S."/>
            <person name="Childs K.L."/>
            <person name="Davidson R.M."/>
            <person name="Lin H."/>
            <person name="Quesada-Ocampo L."/>
            <person name="Vaillancourt B."/>
            <person name="Sakai H."/>
            <person name="Lee S.S."/>
            <person name="Kim J."/>
            <person name="Numa H."/>
            <person name="Itoh T."/>
            <person name="Buell C.R."/>
            <person name="Matsumoto T."/>
        </authorList>
    </citation>
    <scope>GENOME REANNOTATION</scope>
    <source>
        <strain>cv. Nipponbare</strain>
    </source>
</reference>
<reference key="4">
    <citation type="journal article" date="2005" name="PLoS Biol.">
        <title>The genomes of Oryza sativa: a history of duplications.</title>
        <authorList>
            <person name="Yu J."/>
            <person name="Wang J."/>
            <person name="Lin W."/>
            <person name="Li S."/>
            <person name="Li H."/>
            <person name="Zhou J."/>
            <person name="Ni P."/>
            <person name="Dong W."/>
            <person name="Hu S."/>
            <person name="Zeng C."/>
            <person name="Zhang J."/>
            <person name="Zhang Y."/>
            <person name="Li R."/>
            <person name="Xu Z."/>
            <person name="Li S."/>
            <person name="Li X."/>
            <person name="Zheng H."/>
            <person name="Cong L."/>
            <person name="Lin L."/>
            <person name="Yin J."/>
            <person name="Geng J."/>
            <person name="Li G."/>
            <person name="Shi J."/>
            <person name="Liu J."/>
            <person name="Lv H."/>
            <person name="Li J."/>
            <person name="Wang J."/>
            <person name="Deng Y."/>
            <person name="Ran L."/>
            <person name="Shi X."/>
            <person name="Wang X."/>
            <person name="Wu Q."/>
            <person name="Li C."/>
            <person name="Ren X."/>
            <person name="Wang J."/>
            <person name="Wang X."/>
            <person name="Li D."/>
            <person name="Liu D."/>
            <person name="Zhang X."/>
            <person name="Ji Z."/>
            <person name="Zhao W."/>
            <person name="Sun Y."/>
            <person name="Zhang Z."/>
            <person name="Bao J."/>
            <person name="Han Y."/>
            <person name="Dong L."/>
            <person name="Ji J."/>
            <person name="Chen P."/>
            <person name="Wu S."/>
            <person name="Liu J."/>
            <person name="Xiao Y."/>
            <person name="Bu D."/>
            <person name="Tan J."/>
            <person name="Yang L."/>
            <person name="Ye C."/>
            <person name="Zhang J."/>
            <person name="Xu J."/>
            <person name="Zhou Y."/>
            <person name="Yu Y."/>
            <person name="Zhang B."/>
            <person name="Zhuang S."/>
            <person name="Wei H."/>
            <person name="Liu B."/>
            <person name="Lei M."/>
            <person name="Yu H."/>
            <person name="Li Y."/>
            <person name="Xu H."/>
            <person name="Wei S."/>
            <person name="He X."/>
            <person name="Fang L."/>
            <person name="Zhang Z."/>
            <person name="Zhang Y."/>
            <person name="Huang X."/>
            <person name="Su Z."/>
            <person name="Tong W."/>
            <person name="Li J."/>
            <person name="Tong Z."/>
            <person name="Li S."/>
            <person name="Ye J."/>
            <person name="Wang L."/>
            <person name="Fang L."/>
            <person name="Lei T."/>
            <person name="Chen C.-S."/>
            <person name="Chen H.-C."/>
            <person name="Xu Z."/>
            <person name="Li H."/>
            <person name="Huang H."/>
            <person name="Zhang F."/>
            <person name="Xu H."/>
            <person name="Li N."/>
            <person name="Zhao C."/>
            <person name="Li S."/>
            <person name="Dong L."/>
            <person name="Huang Y."/>
            <person name="Li L."/>
            <person name="Xi Y."/>
            <person name="Qi Q."/>
            <person name="Li W."/>
            <person name="Zhang B."/>
            <person name="Hu W."/>
            <person name="Zhang Y."/>
            <person name="Tian X."/>
            <person name="Jiao Y."/>
            <person name="Liang X."/>
            <person name="Jin J."/>
            <person name="Gao L."/>
            <person name="Zheng W."/>
            <person name="Hao B."/>
            <person name="Liu S.-M."/>
            <person name="Wang W."/>
            <person name="Yuan L."/>
            <person name="Cao M."/>
            <person name="McDermott J."/>
            <person name="Samudrala R."/>
            <person name="Wang J."/>
            <person name="Wong G.K.-S."/>
            <person name="Yang H."/>
        </authorList>
    </citation>
    <scope>NUCLEOTIDE SEQUENCE [LARGE SCALE GENOMIC DNA]</scope>
    <source>
        <strain>cv. Nipponbare</strain>
    </source>
</reference>
<reference key="5">
    <citation type="journal article" date="2005" name="Plant Physiol.">
        <title>Phylogenetic analyses identify 10 classes of the protein disulfide isomerase family in plants, including single-domain protein disulfide isomerase-related proteins.</title>
        <authorList>
            <person name="Houston N.L."/>
            <person name="Fan C."/>
            <person name="Xiang J.Q."/>
            <person name="Schulze J.M."/>
            <person name="Jung R."/>
            <person name="Boston R.S."/>
        </authorList>
    </citation>
    <scope>GENE FAMILY</scope>
    <scope>NOMENCLATURE</scope>
</reference>
<reference key="6">
    <citation type="journal article" date="2010" name="BMC Plant Biol.">
        <title>The protein disulfide isomerase gene family in bread wheat (T. aestivum L.).</title>
        <authorList>
            <person name="d'Aloisio E."/>
            <person name="Paolacci A.R."/>
            <person name="Dhanapal A.P."/>
            <person name="Tanzarella O.A."/>
            <person name="Porceddu E."/>
            <person name="Ciaffi M."/>
        </authorList>
    </citation>
    <scope>GENE FAMILY</scope>
    <scope>NOMENCLATURE</scope>
</reference>
<accession>Q0E0I1</accession>
<feature type="signal peptide" evidence="2">
    <location>
        <begin position="1"/>
        <end position="28"/>
    </location>
</feature>
<feature type="chain" id="PRO_0000400038" description="Protein disulfide isomerase-like 5-3">
    <location>
        <begin position="29"/>
        <end position="425"/>
    </location>
</feature>
<feature type="transmembrane region" description="Helical" evidence="2">
    <location>
        <begin position="386"/>
        <end position="406"/>
    </location>
</feature>
<feature type="domain" description="Thioredoxin" evidence="3">
    <location>
        <begin position="29"/>
        <end position="153"/>
    </location>
</feature>
<feature type="active site" description="Nucleophile" evidence="1">
    <location>
        <position position="75"/>
    </location>
</feature>
<feature type="active site" description="Nucleophile" evidence="1">
    <location>
        <position position="78"/>
    </location>
</feature>
<feature type="site" description="Contributes to redox potential value" evidence="1">
    <location>
        <position position="76"/>
    </location>
</feature>
<feature type="site" description="Contributes to redox potential value" evidence="1">
    <location>
        <position position="77"/>
    </location>
</feature>
<feature type="site" description="Lowers pKa of C-terminal Cys of active site" evidence="1">
    <location>
        <position position="139"/>
    </location>
</feature>
<feature type="disulfide bond" description="Redox-active" evidence="3">
    <location>
        <begin position="75"/>
        <end position="78"/>
    </location>
</feature>
<protein>
    <recommendedName>
        <fullName>Protein disulfide isomerase-like 5-3</fullName>
        <shortName>OsPDIL5-3</shortName>
    </recommendedName>
    <alternativeName>
        <fullName>Protein disulfide isomerase-like 7-2</fullName>
        <shortName>OsPDIL7-2</shortName>
    </alternativeName>
</protein>
<organism>
    <name type="scientific">Oryza sativa subsp. japonica</name>
    <name type="common">Rice</name>
    <dbReference type="NCBI Taxonomy" id="39947"/>
    <lineage>
        <taxon>Eukaryota</taxon>
        <taxon>Viridiplantae</taxon>
        <taxon>Streptophyta</taxon>
        <taxon>Embryophyta</taxon>
        <taxon>Tracheophyta</taxon>
        <taxon>Spermatophyta</taxon>
        <taxon>Magnoliopsida</taxon>
        <taxon>Liliopsida</taxon>
        <taxon>Poales</taxon>
        <taxon>Poaceae</taxon>
        <taxon>BOP clade</taxon>
        <taxon>Oryzoideae</taxon>
        <taxon>Oryzeae</taxon>
        <taxon>Oryzinae</taxon>
        <taxon>Oryza</taxon>
        <taxon>Oryza sativa</taxon>
    </lineage>
</organism>
<comment type="function">
    <text evidence="1">Acts as a protein-folding catalyst that interacts with nascent polypeptides to catalyze the formation, isomerization, and reduction or oxidation of disulfide bonds. May play a role in storage protein biogenesis (By similarity).</text>
</comment>
<comment type="subcellular location">
    <subcellularLocation>
        <location evidence="4">Membrane</location>
        <topology>Single-pass membrane protein</topology>
    </subcellularLocation>
</comment>
<comment type="similarity">
    <text evidence="4">Belongs to the protein disulfide isomerase family.</text>
</comment>
<name>PDI53_ORYSJ</name>
<proteinExistence type="inferred from homology"/>